<sequence>MTQTLSQLEHHDAFIARHIGPSAPQQVHMLATVGSDSLAGLIAQIVPADIQLAAAPAVGEATTEAQALAELKAIARQNQRYKSFIGMGYSAVVTPPVILRNMLENPGWYTAYTPYQPEVSQGRLEALLNFQQLTLDLTGLDIASASLLDEATAAAEAMALAKRSSKLKQANCFFVADDVHPQTLDVLRTRAGTFGFELVIDKAQAALEHPDLFGVLLQQVGTTGELHDYRALMAELTRRKIISCVAADMLSLVLLAAPGEQGADVVFGSSQRFGVPMGYGGPHAAFFAARDEMKRAMPGRIIGVSRDAAGDTALRMVMQTREQHIRREKANSNICTSQVLLANIAGLYAVYHGPQGLKRIAGRIHRLTTILAQGLHDADLTLRHDRWFDTLTVEVVDKAGVLARANAAGINLRSDIHGAVGITLDETTVREDVQTLWQVVTGAAGTLAIDALDAGCDEVIPPELLRATPILTHEVFNRYHSETEMMRYMHRLERKDLALNQAMIPLGSCTMKLNAAAEMIPITWPEFAELHPFCPPEQAAGYQQMIAQLSRWLIQLTGYDALCMQPNSGAQGEYAGLLAIRRYHESRNQGERHICLIPSSAHGTNPASAQMAGMSVTVVACDKNGNIDLHDLRAKAEQAGEQLSCIMVTYPSTHGVYEETIREVCQIVHQYGGQVYLDGANMNAQVGITSPGYIGADVSHLNLHKTFCIPHGGGGPGMGPIGVKAHLAPFVPGHLVVELDGVLTRQGAVSAAPFGSASILPISWMYIRMMGAEGLKQASQVAILNANYIATRLQQAYPVLYTGRAGRVAHECILDIRPLKEATGISEMDIAKRLIDYGFHAPTMSFPVAGTLMVEPTESESQLELDRFIDAMLAIRAEIQQVADGVWPASDNPLVNAPYTQRELAGEWRHPYDRQIAAFPAGYGDKYWPAVKRLDDVYGDRNLFCACVPLSDY</sequence>
<accession>Q2NRF0</accession>
<reference key="1">
    <citation type="journal article" date="2006" name="Genome Res.">
        <title>Massive genome erosion and functional adaptations provide insights into the symbiotic lifestyle of Sodalis glossinidius in the tsetse host.</title>
        <authorList>
            <person name="Toh H."/>
            <person name="Weiss B.L."/>
            <person name="Perkin S.A.H."/>
            <person name="Yamashita A."/>
            <person name="Oshima K."/>
            <person name="Hattori M."/>
            <person name="Aksoy S."/>
        </authorList>
    </citation>
    <scope>NUCLEOTIDE SEQUENCE [LARGE SCALE GENOMIC DNA]</scope>
    <source>
        <strain>morsitans</strain>
    </source>
</reference>
<dbReference type="EC" id="1.4.4.2" evidence="1"/>
<dbReference type="EMBL" id="AP008232">
    <property type="protein sequence ID" value="BAE75275.1"/>
    <property type="molecule type" value="Genomic_DNA"/>
</dbReference>
<dbReference type="RefSeq" id="WP_011411730.1">
    <property type="nucleotide sequence ID" value="NC_007712.1"/>
</dbReference>
<dbReference type="SMR" id="Q2NRF0"/>
<dbReference type="STRING" id="343509.SG2000"/>
<dbReference type="KEGG" id="sgl:SG2000"/>
<dbReference type="eggNOG" id="COG0403">
    <property type="taxonomic scope" value="Bacteria"/>
</dbReference>
<dbReference type="eggNOG" id="COG1003">
    <property type="taxonomic scope" value="Bacteria"/>
</dbReference>
<dbReference type="HOGENOM" id="CLU_004620_3_2_6"/>
<dbReference type="OrthoDB" id="9801272at2"/>
<dbReference type="Proteomes" id="UP000001932">
    <property type="component" value="Chromosome"/>
</dbReference>
<dbReference type="GO" id="GO:0005829">
    <property type="term" value="C:cytosol"/>
    <property type="evidence" value="ECO:0007669"/>
    <property type="project" value="TreeGrafter"/>
</dbReference>
<dbReference type="GO" id="GO:0005960">
    <property type="term" value="C:glycine cleavage complex"/>
    <property type="evidence" value="ECO:0007669"/>
    <property type="project" value="TreeGrafter"/>
</dbReference>
<dbReference type="GO" id="GO:0016594">
    <property type="term" value="F:glycine binding"/>
    <property type="evidence" value="ECO:0007669"/>
    <property type="project" value="TreeGrafter"/>
</dbReference>
<dbReference type="GO" id="GO:0004375">
    <property type="term" value="F:glycine dehydrogenase (decarboxylating) activity"/>
    <property type="evidence" value="ECO:0007669"/>
    <property type="project" value="UniProtKB-EC"/>
</dbReference>
<dbReference type="GO" id="GO:0030170">
    <property type="term" value="F:pyridoxal phosphate binding"/>
    <property type="evidence" value="ECO:0007669"/>
    <property type="project" value="TreeGrafter"/>
</dbReference>
<dbReference type="GO" id="GO:0019464">
    <property type="term" value="P:glycine decarboxylation via glycine cleavage system"/>
    <property type="evidence" value="ECO:0007669"/>
    <property type="project" value="UniProtKB-UniRule"/>
</dbReference>
<dbReference type="CDD" id="cd00613">
    <property type="entry name" value="GDC-P"/>
    <property type="match status" value="2"/>
</dbReference>
<dbReference type="FunFam" id="3.40.640.10:FF:000005">
    <property type="entry name" value="Glycine dehydrogenase (decarboxylating), mitochondrial"/>
    <property type="match status" value="1"/>
</dbReference>
<dbReference type="FunFam" id="3.90.1150.10:FF:000007">
    <property type="entry name" value="Glycine dehydrogenase (decarboxylating), mitochondrial"/>
    <property type="match status" value="1"/>
</dbReference>
<dbReference type="FunFam" id="3.40.640.10:FF:000007">
    <property type="entry name" value="glycine dehydrogenase (Decarboxylating), mitochondrial"/>
    <property type="match status" value="1"/>
</dbReference>
<dbReference type="Gene3D" id="3.90.1150.10">
    <property type="entry name" value="Aspartate Aminotransferase, domain 1"/>
    <property type="match status" value="2"/>
</dbReference>
<dbReference type="Gene3D" id="3.40.640.10">
    <property type="entry name" value="Type I PLP-dependent aspartate aminotransferase-like (Major domain)"/>
    <property type="match status" value="2"/>
</dbReference>
<dbReference type="HAMAP" id="MF_00711">
    <property type="entry name" value="GcvP"/>
    <property type="match status" value="1"/>
</dbReference>
<dbReference type="InterPro" id="IPR003437">
    <property type="entry name" value="GcvP"/>
</dbReference>
<dbReference type="InterPro" id="IPR049316">
    <property type="entry name" value="GDC-P_C"/>
</dbReference>
<dbReference type="InterPro" id="IPR049315">
    <property type="entry name" value="GDC-P_N"/>
</dbReference>
<dbReference type="InterPro" id="IPR020581">
    <property type="entry name" value="GDC_P"/>
</dbReference>
<dbReference type="InterPro" id="IPR015424">
    <property type="entry name" value="PyrdxlP-dep_Trfase"/>
</dbReference>
<dbReference type="InterPro" id="IPR015421">
    <property type="entry name" value="PyrdxlP-dep_Trfase_major"/>
</dbReference>
<dbReference type="InterPro" id="IPR015422">
    <property type="entry name" value="PyrdxlP-dep_Trfase_small"/>
</dbReference>
<dbReference type="NCBIfam" id="TIGR00461">
    <property type="entry name" value="gcvP"/>
    <property type="match status" value="1"/>
</dbReference>
<dbReference type="NCBIfam" id="NF003346">
    <property type="entry name" value="PRK04366.1"/>
    <property type="match status" value="1"/>
</dbReference>
<dbReference type="PANTHER" id="PTHR11773:SF13">
    <property type="entry name" value="GLYCINE DEHYDROGENASE (DECARBOXYLATING)"/>
    <property type="match status" value="1"/>
</dbReference>
<dbReference type="PANTHER" id="PTHR11773">
    <property type="entry name" value="GLYCINE DEHYDROGENASE, DECARBOXYLATING"/>
    <property type="match status" value="1"/>
</dbReference>
<dbReference type="Pfam" id="PF21478">
    <property type="entry name" value="GcvP2_C"/>
    <property type="match status" value="1"/>
</dbReference>
<dbReference type="Pfam" id="PF02347">
    <property type="entry name" value="GDC-P"/>
    <property type="match status" value="2"/>
</dbReference>
<dbReference type="SUPFAM" id="SSF53383">
    <property type="entry name" value="PLP-dependent transferases"/>
    <property type="match status" value="2"/>
</dbReference>
<keyword id="KW-0560">Oxidoreductase</keyword>
<keyword id="KW-0663">Pyridoxal phosphate</keyword>
<name>GCSP_SODGM</name>
<evidence type="ECO:0000255" key="1">
    <source>
        <dbReference type="HAMAP-Rule" id="MF_00711"/>
    </source>
</evidence>
<proteinExistence type="inferred from homology"/>
<protein>
    <recommendedName>
        <fullName evidence="1">Glycine dehydrogenase (decarboxylating)</fullName>
        <ecNumber evidence="1">1.4.4.2</ecNumber>
    </recommendedName>
    <alternativeName>
        <fullName evidence="1">Glycine cleavage system P-protein</fullName>
    </alternativeName>
    <alternativeName>
        <fullName evidence="1">Glycine decarboxylase</fullName>
    </alternativeName>
    <alternativeName>
        <fullName evidence="1">Glycine dehydrogenase (aminomethyl-transferring)</fullName>
    </alternativeName>
</protein>
<comment type="function">
    <text evidence="1">The glycine cleavage system catalyzes the degradation of glycine. The P protein binds the alpha-amino group of glycine through its pyridoxal phosphate cofactor; CO(2) is released and the remaining methylamine moiety is then transferred to the lipoamide cofactor of the H protein.</text>
</comment>
<comment type="catalytic activity">
    <reaction evidence="1">
        <text>N(6)-[(R)-lipoyl]-L-lysyl-[glycine-cleavage complex H protein] + glycine + H(+) = N(6)-[(R)-S(8)-aminomethyldihydrolipoyl]-L-lysyl-[glycine-cleavage complex H protein] + CO2</text>
        <dbReference type="Rhea" id="RHEA:24304"/>
        <dbReference type="Rhea" id="RHEA-COMP:10494"/>
        <dbReference type="Rhea" id="RHEA-COMP:10495"/>
        <dbReference type="ChEBI" id="CHEBI:15378"/>
        <dbReference type="ChEBI" id="CHEBI:16526"/>
        <dbReference type="ChEBI" id="CHEBI:57305"/>
        <dbReference type="ChEBI" id="CHEBI:83099"/>
        <dbReference type="ChEBI" id="CHEBI:83143"/>
        <dbReference type="EC" id="1.4.4.2"/>
    </reaction>
</comment>
<comment type="cofactor">
    <cofactor evidence="1">
        <name>pyridoxal 5'-phosphate</name>
        <dbReference type="ChEBI" id="CHEBI:597326"/>
    </cofactor>
</comment>
<comment type="subunit">
    <text evidence="1">The glycine cleavage system is composed of four proteins: P, T, L and H.</text>
</comment>
<comment type="similarity">
    <text evidence="1">Belongs to the GcvP family.</text>
</comment>
<organism>
    <name type="scientific">Sodalis glossinidius (strain morsitans)</name>
    <dbReference type="NCBI Taxonomy" id="343509"/>
    <lineage>
        <taxon>Bacteria</taxon>
        <taxon>Pseudomonadati</taxon>
        <taxon>Pseudomonadota</taxon>
        <taxon>Gammaproteobacteria</taxon>
        <taxon>Enterobacterales</taxon>
        <taxon>Bruguierivoracaceae</taxon>
        <taxon>Sodalis</taxon>
    </lineage>
</organism>
<gene>
    <name evidence="1" type="primary">gcvP</name>
    <name type="ordered locus">SG2000</name>
</gene>
<feature type="chain" id="PRO_1000045621" description="Glycine dehydrogenase (decarboxylating)">
    <location>
        <begin position="1"/>
        <end position="953"/>
    </location>
</feature>
<feature type="modified residue" description="N6-(pyridoxal phosphate)lysine" evidence="1">
    <location>
        <position position="705"/>
    </location>
</feature>